<gene>
    <name evidence="1" type="primary">gatB</name>
    <name type="ordered locus">DR_2555</name>
</gene>
<sequence>MTYQAVIGLEVHLQLNTRSKIFSACPADYHGAGPNEFTDPLTLGLPGTLPTLNRRAVELAMMFGLGLGCDVSGFTQFHRKNYFYPDAPKNFQLSQYDRPIARDGYLDVPGEGGPERIRIKRAHLEDDAGKLVHPTYAPYSLLDLNRAGSALIEMVTEADITGPEQARAFLESVQAIAQSLGVSDATPEEGKMRCDVNISIHKPGEPWGTKVEVKNLNSFRSVARAIEYEAARQAKVLDAGGIITQDTLGWDEGGQKTFLMRTKEGEADYRYFPEPDLPPLDITPEWIAEVRARMPELPAQKLERYRAAGVRESDAQTLSLSVSLSKFYDEALKSGSDTQKPDAQKLANWLLTDVAGALAAQEKGVEDSDLQPAHLAALVGLIDAGTISGKIAKDLLPDVLAGHDPAQLVQERGLSVVTDTGAIDAAIDAAMEADPATVEKVRGGNAKAMNALFGPVMKAMGGKAKPEVVRERLTAKLGL</sequence>
<organism>
    <name type="scientific">Deinococcus radiodurans (strain ATCC 13939 / DSM 20539 / JCM 16871 / CCUG 27074 / LMG 4051 / NBRC 15346 / NCIMB 9279 / VKM B-1422 / R1)</name>
    <dbReference type="NCBI Taxonomy" id="243230"/>
    <lineage>
        <taxon>Bacteria</taxon>
        <taxon>Thermotogati</taxon>
        <taxon>Deinococcota</taxon>
        <taxon>Deinococci</taxon>
        <taxon>Deinococcales</taxon>
        <taxon>Deinococcaceae</taxon>
        <taxon>Deinococcus</taxon>
    </lineage>
</organism>
<proteinExistence type="inferred from homology"/>
<reference key="1">
    <citation type="journal article" date="1999" name="Science">
        <title>Genome sequence of the radioresistant bacterium Deinococcus radiodurans R1.</title>
        <authorList>
            <person name="White O."/>
            <person name="Eisen J.A."/>
            <person name="Heidelberg J.F."/>
            <person name="Hickey E.K."/>
            <person name="Peterson J.D."/>
            <person name="Dodson R.J."/>
            <person name="Haft D.H."/>
            <person name="Gwinn M.L."/>
            <person name="Nelson W.C."/>
            <person name="Richardson D.L."/>
            <person name="Moffat K.S."/>
            <person name="Qin H."/>
            <person name="Jiang L."/>
            <person name="Pamphile W."/>
            <person name="Crosby M."/>
            <person name="Shen M."/>
            <person name="Vamathevan J.J."/>
            <person name="Lam P."/>
            <person name="McDonald L.A."/>
            <person name="Utterback T.R."/>
            <person name="Zalewski C."/>
            <person name="Makarova K.S."/>
            <person name="Aravind L."/>
            <person name="Daly M.J."/>
            <person name="Minton K.W."/>
            <person name="Fleischmann R.D."/>
            <person name="Ketchum K.A."/>
            <person name="Nelson K.E."/>
            <person name="Salzberg S.L."/>
            <person name="Smith H.O."/>
            <person name="Venter J.C."/>
            <person name="Fraser C.M."/>
        </authorList>
    </citation>
    <scope>NUCLEOTIDE SEQUENCE [LARGE SCALE GENOMIC DNA]</scope>
    <source>
        <strain>ATCC 13939 / DSM 20539 / JCM 16871 / CCUG 27074 / LMG 4051 / NBRC 15346 / NCIMB 9279 / VKM B-1422 / R1</strain>
    </source>
</reference>
<keyword id="KW-0067">ATP-binding</keyword>
<keyword id="KW-0436">Ligase</keyword>
<keyword id="KW-0547">Nucleotide-binding</keyword>
<keyword id="KW-0648">Protein biosynthesis</keyword>
<keyword id="KW-1185">Reference proteome</keyword>
<accession>Q9RRD7</accession>
<protein>
    <recommendedName>
        <fullName evidence="1">Aspartyl/glutamyl-tRNA(Asn/Gln) amidotransferase subunit B</fullName>
        <shortName evidence="1">Asp/Glu-ADT subunit B</shortName>
        <ecNumber evidence="1">6.3.5.-</ecNumber>
    </recommendedName>
</protein>
<dbReference type="EC" id="6.3.5.-" evidence="1"/>
<dbReference type="EMBL" id="AE000513">
    <property type="protein sequence ID" value="AAF12094.1"/>
    <property type="status" value="ALT_INIT"/>
    <property type="molecule type" value="Genomic_DNA"/>
</dbReference>
<dbReference type="PIR" id="F75260">
    <property type="entry name" value="F75260"/>
</dbReference>
<dbReference type="RefSeq" id="NP_296275.1">
    <property type="nucleotide sequence ID" value="NC_001263.1"/>
</dbReference>
<dbReference type="RefSeq" id="WP_027480100.1">
    <property type="nucleotide sequence ID" value="NC_001263.1"/>
</dbReference>
<dbReference type="SMR" id="Q9RRD7"/>
<dbReference type="FunCoup" id="Q9RRD7">
    <property type="interactions" value="458"/>
</dbReference>
<dbReference type="STRING" id="243230.DR_2555"/>
<dbReference type="PaxDb" id="243230-DR_2555"/>
<dbReference type="EnsemblBacteria" id="AAF12094">
    <property type="protein sequence ID" value="AAF12094"/>
    <property type="gene ID" value="DR_2555"/>
</dbReference>
<dbReference type="GeneID" id="69518807"/>
<dbReference type="KEGG" id="dra:DR_2555"/>
<dbReference type="PATRIC" id="fig|243230.17.peg.2798"/>
<dbReference type="eggNOG" id="COG0064">
    <property type="taxonomic scope" value="Bacteria"/>
</dbReference>
<dbReference type="HOGENOM" id="CLU_019240_0_0_0"/>
<dbReference type="InParanoid" id="Q9RRD7"/>
<dbReference type="OrthoDB" id="9804078at2"/>
<dbReference type="BioCyc" id="MetaCyc:MONOMER-14050"/>
<dbReference type="Proteomes" id="UP000002524">
    <property type="component" value="Chromosome 1"/>
</dbReference>
<dbReference type="GO" id="GO:0050566">
    <property type="term" value="F:asparaginyl-tRNA synthase (glutamine-hydrolyzing) activity"/>
    <property type="evidence" value="ECO:0007669"/>
    <property type="project" value="RHEA"/>
</dbReference>
<dbReference type="GO" id="GO:0005524">
    <property type="term" value="F:ATP binding"/>
    <property type="evidence" value="ECO:0007669"/>
    <property type="project" value="UniProtKB-KW"/>
</dbReference>
<dbReference type="GO" id="GO:0050567">
    <property type="term" value="F:glutaminyl-tRNA synthase (glutamine-hydrolyzing) activity"/>
    <property type="evidence" value="ECO:0000318"/>
    <property type="project" value="GO_Central"/>
</dbReference>
<dbReference type="GO" id="GO:0070681">
    <property type="term" value="P:glutaminyl-tRNAGln biosynthesis via transamidation"/>
    <property type="evidence" value="ECO:0000318"/>
    <property type="project" value="GO_Central"/>
</dbReference>
<dbReference type="GO" id="GO:0006412">
    <property type="term" value="P:translation"/>
    <property type="evidence" value="ECO:0007669"/>
    <property type="project" value="UniProtKB-UniRule"/>
</dbReference>
<dbReference type="FunFam" id="1.10.10.410:FF:000001">
    <property type="entry name" value="Aspartyl/glutamyl-tRNA(Asn/Gln) amidotransferase subunit B"/>
    <property type="match status" value="1"/>
</dbReference>
<dbReference type="Gene3D" id="1.10.10.410">
    <property type="match status" value="1"/>
</dbReference>
<dbReference type="HAMAP" id="MF_00121">
    <property type="entry name" value="GatB"/>
    <property type="match status" value="1"/>
</dbReference>
<dbReference type="InterPro" id="IPR017959">
    <property type="entry name" value="Asn/Gln-tRNA_amidoTrfase_suB/E"/>
</dbReference>
<dbReference type="InterPro" id="IPR006075">
    <property type="entry name" value="Asn/Gln-tRNA_Trfase_suB/E_cat"/>
</dbReference>
<dbReference type="InterPro" id="IPR018027">
    <property type="entry name" value="Asn/Gln_amidotransferase"/>
</dbReference>
<dbReference type="InterPro" id="IPR003789">
    <property type="entry name" value="Asn/Gln_tRNA_amidoTrase-B-like"/>
</dbReference>
<dbReference type="InterPro" id="IPR004413">
    <property type="entry name" value="GatB"/>
</dbReference>
<dbReference type="InterPro" id="IPR023168">
    <property type="entry name" value="GatB_Yqey_C_2"/>
</dbReference>
<dbReference type="InterPro" id="IPR017958">
    <property type="entry name" value="Gln-tRNA_amidoTrfase_suB_CS"/>
</dbReference>
<dbReference type="InterPro" id="IPR014746">
    <property type="entry name" value="Gln_synth/guanido_kin_cat_dom"/>
</dbReference>
<dbReference type="NCBIfam" id="TIGR00133">
    <property type="entry name" value="gatB"/>
    <property type="match status" value="1"/>
</dbReference>
<dbReference type="NCBIfam" id="NF004012">
    <property type="entry name" value="PRK05477.1-2"/>
    <property type="match status" value="1"/>
</dbReference>
<dbReference type="NCBIfam" id="NF004014">
    <property type="entry name" value="PRK05477.1-4"/>
    <property type="match status" value="1"/>
</dbReference>
<dbReference type="PANTHER" id="PTHR11659">
    <property type="entry name" value="GLUTAMYL-TRNA GLN AMIDOTRANSFERASE SUBUNIT B MITOCHONDRIAL AND PROKARYOTIC PET112-RELATED"/>
    <property type="match status" value="1"/>
</dbReference>
<dbReference type="PANTHER" id="PTHR11659:SF0">
    <property type="entry name" value="GLUTAMYL-TRNA(GLN) AMIDOTRANSFERASE SUBUNIT B, MITOCHONDRIAL"/>
    <property type="match status" value="1"/>
</dbReference>
<dbReference type="Pfam" id="PF02934">
    <property type="entry name" value="GatB_N"/>
    <property type="match status" value="1"/>
</dbReference>
<dbReference type="Pfam" id="PF02637">
    <property type="entry name" value="GatB_Yqey"/>
    <property type="match status" value="1"/>
</dbReference>
<dbReference type="SMART" id="SM00845">
    <property type="entry name" value="GatB_Yqey"/>
    <property type="match status" value="1"/>
</dbReference>
<dbReference type="SUPFAM" id="SSF89095">
    <property type="entry name" value="GatB/YqeY motif"/>
    <property type="match status" value="1"/>
</dbReference>
<dbReference type="SUPFAM" id="SSF55931">
    <property type="entry name" value="Glutamine synthetase/guanido kinase"/>
    <property type="match status" value="1"/>
</dbReference>
<dbReference type="PROSITE" id="PS01234">
    <property type="entry name" value="GATB"/>
    <property type="match status" value="1"/>
</dbReference>
<feature type="chain" id="PRO_0000148788" description="Aspartyl/glutamyl-tRNA(Asn/Gln) amidotransferase subunit B">
    <location>
        <begin position="1"/>
        <end position="479"/>
    </location>
</feature>
<comment type="function">
    <text evidence="1">Allows the formation of correctly charged Asn-tRNA(Asn) or Gln-tRNA(Gln) through the transamidation of misacylated Asp-tRNA(Asn) or Glu-tRNA(Gln) in organisms which lack either or both of asparaginyl-tRNA or glutaminyl-tRNA synthetases. The reaction takes place in the presence of glutamine and ATP through an activated phospho-Asp-tRNA(Asn) or phospho-Glu-tRNA(Gln).</text>
</comment>
<comment type="catalytic activity">
    <reaction evidence="1">
        <text>L-glutamyl-tRNA(Gln) + L-glutamine + ATP + H2O = L-glutaminyl-tRNA(Gln) + L-glutamate + ADP + phosphate + H(+)</text>
        <dbReference type="Rhea" id="RHEA:17521"/>
        <dbReference type="Rhea" id="RHEA-COMP:9681"/>
        <dbReference type="Rhea" id="RHEA-COMP:9684"/>
        <dbReference type="ChEBI" id="CHEBI:15377"/>
        <dbReference type="ChEBI" id="CHEBI:15378"/>
        <dbReference type="ChEBI" id="CHEBI:29985"/>
        <dbReference type="ChEBI" id="CHEBI:30616"/>
        <dbReference type="ChEBI" id="CHEBI:43474"/>
        <dbReference type="ChEBI" id="CHEBI:58359"/>
        <dbReference type="ChEBI" id="CHEBI:78520"/>
        <dbReference type="ChEBI" id="CHEBI:78521"/>
        <dbReference type="ChEBI" id="CHEBI:456216"/>
    </reaction>
</comment>
<comment type="catalytic activity">
    <reaction evidence="1">
        <text>L-aspartyl-tRNA(Asn) + L-glutamine + ATP + H2O = L-asparaginyl-tRNA(Asn) + L-glutamate + ADP + phosphate + 2 H(+)</text>
        <dbReference type="Rhea" id="RHEA:14513"/>
        <dbReference type="Rhea" id="RHEA-COMP:9674"/>
        <dbReference type="Rhea" id="RHEA-COMP:9677"/>
        <dbReference type="ChEBI" id="CHEBI:15377"/>
        <dbReference type="ChEBI" id="CHEBI:15378"/>
        <dbReference type="ChEBI" id="CHEBI:29985"/>
        <dbReference type="ChEBI" id="CHEBI:30616"/>
        <dbReference type="ChEBI" id="CHEBI:43474"/>
        <dbReference type="ChEBI" id="CHEBI:58359"/>
        <dbReference type="ChEBI" id="CHEBI:78515"/>
        <dbReference type="ChEBI" id="CHEBI:78516"/>
        <dbReference type="ChEBI" id="CHEBI:456216"/>
    </reaction>
</comment>
<comment type="subunit">
    <text evidence="1">Heterotrimer of A, B and C subunits.</text>
</comment>
<comment type="similarity">
    <text evidence="1">Belongs to the GatB/GatE family. GatB subfamily.</text>
</comment>
<comment type="sequence caution" evidence="2">
    <conflict type="erroneous initiation">
        <sequence resource="EMBL-CDS" id="AAF12094"/>
    </conflict>
</comment>
<name>GATB_DEIRA</name>
<evidence type="ECO:0000255" key="1">
    <source>
        <dbReference type="HAMAP-Rule" id="MF_00121"/>
    </source>
</evidence>
<evidence type="ECO:0000305" key="2"/>